<comment type="function">
    <text evidence="1">Dimethylates a single guanine residue at position 26 of a number of tRNAs using S-adenosyl-L-methionine as donor of the methyl groups.</text>
</comment>
<comment type="catalytic activity">
    <reaction evidence="1">
        <text>guanosine(26) in tRNA + 2 S-adenosyl-L-methionine = N(2)-dimethylguanosine(26) in tRNA + 2 S-adenosyl-L-homocysteine + 2 H(+)</text>
        <dbReference type="Rhea" id="RHEA:43140"/>
        <dbReference type="Rhea" id="RHEA-COMP:10359"/>
        <dbReference type="Rhea" id="RHEA-COMP:10360"/>
        <dbReference type="ChEBI" id="CHEBI:15378"/>
        <dbReference type="ChEBI" id="CHEBI:57856"/>
        <dbReference type="ChEBI" id="CHEBI:59789"/>
        <dbReference type="ChEBI" id="CHEBI:74269"/>
        <dbReference type="ChEBI" id="CHEBI:74513"/>
        <dbReference type="EC" id="2.1.1.216"/>
    </reaction>
</comment>
<comment type="similarity">
    <text evidence="1">Belongs to the class I-like SAM-binding methyltransferase superfamily. Trm1 family.</text>
</comment>
<name>TRM1_METM5</name>
<organism>
    <name type="scientific">Methanococcus maripaludis (strain C5 / ATCC BAA-1333)</name>
    <dbReference type="NCBI Taxonomy" id="402880"/>
    <lineage>
        <taxon>Archaea</taxon>
        <taxon>Methanobacteriati</taxon>
        <taxon>Methanobacteriota</taxon>
        <taxon>Methanomada group</taxon>
        <taxon>Methanococci</taxon>
        <taxon>Methanococcales</taxon>
        <taxon>Methanococcaceae</taxon>
        <taxon>Methanococcus</taxon>
    </lineage>
</organism>
<protein>
    <recommendedName>
        <fullName evidence="1">tRNA (guanine(26)-N(2))-dimethyltransferase</fullName>
        <ecNumber evidence="1">2.1.1.216</ecNumber>
    </recommendedName>
    <alternativeName>
        <fullName evidence="1">tRNA 2,2-dimethylguanosine-26 methyltransferase</fullName>
    </alternativeName>
    <alternativeName>
        <fullName evidence="1">tRNA(guanine-26,N(2)-N(2)) methyltransferase</fullName>
    </alternativeName>
    <alternativeName>
        <fullName evidence="1">tRNA(m(2,2)G26)dimethyltransferase</fullName>
    </alternativeName>
</protein>
<keyword id="KW-0489">Methyltransferase</keyword>
<keyword id="KW-0694">RNA-binding</keyword>
<keyword id="KW-0949">S-adenosyl-L-methionine</keyword>
<keyword id="KW-0808">Transferase</keyword>
<keyword id="KW-0819">tRNA processing</keyword>
<keyword id="KW-0820">tRNA-binding</keyword>
<proteinExistence type="inferred from homology"/>
<sequence>MKIISEGETKLMVPEESTLSKKDTVFYNPVMETNRNISVSVVQSFLDNFKRDEFLMCDPLGGSGARGIRYANELEFNGDLKVSIGDINPSAVKMIKENLKLNELENVEVFHEDANVLLSKNFKVFNVVDLDPFGSPVPYLDSGIRASLTKGGLLCMTATDTAVLCGAYRKTCIRKYNAIPLKGDKELAVRLMIGYAVKMASKYDIGLKPIFSHVTDHYARTFMVTERGAGKADSAIENLGYIRQDSEQKSFKAFEEGYEKGYAGSFYLGEISDKDIVQNSLETAKNRNYSKRAVDILELISKESEIEQVGCFDIHELCSFIKKLVPPVNDIMDNLKENGFKVSRVHYNPYGLKTDAELSDLVVLISEYHSKKY</sequence>
<evidence type="ECO:0000255" key="1">
    <source>
        <dbReference type="HAMAP-Rule" id="MF_00290"/>
    </source>
</evidence>
<gene>
    <name evidence="1" type="primary">trm1</name>
    <name type="ordered locus">MmarC5_1472</name>
</gene>
<dbReference type="EC" id="2.1.1.216" evidence="1"/>
<dbReference type="EMBL" id="CP000609">
    <property type="protein sequence ID" value="ABO35769.1"/>
    <property type="molecule type" value="Genomic_DNA"/>
</dbReference>
<dbReference type="RefSeq" id="WP_011869219.1">
    <property type="nucleotide sequence ID" value="NC_009135.1"/>
</dbReference>
<dbReference type="SMR" id="A4FZY5"/>
<dbReference type="STRING" id="402880.MmarC5_1472"/>
<dbReference type="GeneID" id="4927645"/>
<dbReference type="KEGG" id="mmq:MmarC5_1472"/>
<dbReference type="eggNOG" id="arCOG01219">
    <property type="taxonomic scope" value="Archaea"/>
</dbReference>
<dbReference type="HOGENOM" id="CLU_010862_5_1_2"/>
<dbReference type="OrthoDB" id="372177at2157"/>
<dbReference type="Proteomes" id="UP000000253">
    <property type="component" value="Chromosome"/>
</dbReference>
<dbReference type="GO" id="GO:0160104">
    <property type="term" value="F:tRNA (guanine(26)-N2)-dimethyltransferase activity"/>
    <property type="evidence" value="ECO:0007669"/>
    <property type="project" value="UniProtKB-UniRule"/>
</dbReference>
<dbReference type="GO" id="GO:0000049">
    <property type="term" value="F:tRNA binding"/>
    <property type="evidence" value="ECO:0007669"/>
    <property type="project" value="UniProtKB-KW"/>
</dbReference>
<dbReference type="GO" id="GO:0002940">
    <property type="term" value="P:tRNA N2-guanine methylation"/>
    <property type="evidence" value="ECO:0007669"/>
    <property type="project" value="TreeGrafter"/>
</dbReference>
<dbReference type="CDD" id="cd02440">
    <property type="entry name" value="AdoMet_MTases"/>
    <property type="match status" value="1"/>
</dbReference>
<dbReference type="Gene3D" id="3.30.56.70">
    <property type="entry name" value="N2,N2-dimethylguanosine tRNA methyltransferase, C-terminal domain"/>
    <property type="match status" value="1"/>
</dbReference>
<dbReference type="Gene3D" id="3.40.50.150">
    <property type="entry name" value="Vaccinia Virus protein VP39"/>
    <property type="match status" value="1"/>
</dbReference>
<dbReference type="HAMAP" id="MF_00290">
    <property type="entry name" value="tRNA_dimethyltr_TRM1"/>
    <property type="match status" value="1"/>
</dbReference>
<dbReference type="InterPro" id="IPR029063">
    <property type="entry name" value="SAM-dependent_MTases_sf"/>
</dbReference>
<dbReference type="InterPro" id="IPR002905">
    <property type="entry name" value="Trm1"/>
</dbReference>
<dbReference type="InterPro" id="IPR022923">
    <property type="entry name" value="TRM1_arc_bac"/>
</dbReference>
<dbReference type="InterPro" id="IPR042296">
    <property type="entry name" value="tRNA_met_Trm1_C"/>
</dbReference>
<dbReference type="NCBIfam" id="TIGR00308">
    <property type="entry name" value="TRM1"/>
    <property type="match status" value="1"/>
</dbReference>
<dbReference type="PANTHER" id="PTHR10631">
    <property type="entry name" value="N 2 ,N 2 -DIMETHYLGUANOSINE TRNA METHYLTRANSFERASE"/>
    <property type="match status" value="1"/>
</dbReference>
<dbReference type="PANTHER" id="PTHR10631:SF3">
    <property type="entry name" value="TRNA (GUANINE(26)-N(2))-DIMETHYLTRANSFERASE"/>
    <property type="match status" value="1"/>
</dbReference>
<dbReference type="Pfam" id="PF02005">
    <property type="entry name" value="TRM"/>
    <property type="match status" value="1"/>
</dbReference>
<dbReference type="SUPFAM" id="SSF53335">
    <property type="entry name" value="S-adenosyl-L-methionine-dependent methyltransferases"/>
    <property type="match status" value="1"/>
</dbReference>
<dbReference type="PROSITE" id="PS51626">
    <property type="entry name" value="SAM_MT_TRM1"/>
    <property type="match status" value="1"/>
</dbReference>
<accession>A4FZY5</accession>
<feature type="chain" id="PRO_1000114977" description="tRNA (guanine(26)-N(2))-dimethyltransferase">
    <location>
        <begin position="1"/>
        <end position="373"/>
    </location>
</feature>
<feature type="domain" description="Trm1 methyltransferase" evidence="1">
    <location>
        <begin position="2"/>
        <end position="365"/>
    </location>
</feature>
<feature type="binding site" evidence="1">
    <location>
        <position position="35"/>
    </location>
    <ligand>
        <name>S-adenosyl-L-methionine</name>
        <dbReference type="ChEBI" id="CHEBI:59789"/>
    </ligand>
</feature>
<feature type="binding site" evidence="1">
    <location>
        <position position="66"/>
    </location>
    <ligand>
        <name>S-adenosyl-L-methionine</name>
        <dbReference type="ChEBI" id="CHEBI:59789"/>
    </ligand>
</feature>
<feature type="binding site" evidence="1">
    <location>
        <position position="86"/>
    </location>
    <ligand>
        <name>S-adenosyl-L-methionine</name>
        <dbReference type="ChEBI" id="CHEBI:59789"/>
    </ligand>
</feature>
<feature type="binding site" evidence="1">
    <location>
        <position position="113"/>
    </location>
    <ligand>
        <name>S-adenosyl-L-methionine</name>
        <dbReference type="ChEBI" id="CHEBI:59789"/>
    </ligand>
</feature>
<feature type="binding site" evidence="1">
    <location>
        <position position="114"/>
    </location>
    <ligand>
        <name>S-adenosyl-L-methionine</name>
        <dbReference type="ChEBI" id="CHEBI:59789"/>
    </ligand>
</feature>
<reference key="1">
    <citation type="submission" date="2007-03" db="EMBL/GenBank/DDBJ databases">
        <title>Complete sequence of chromosome of Methanococcus maripaludis C5.</title>
        <authorList>
            <consortium name="US DOE Joint Genome Institute"/>
            <person name="Copeland A."/>
            <person name="Lucas S."/>
            <person name="Lapidus A."/>
            <person name="Barry K."/>
            <person name="Glavina del Rio T."/>
            <person name="Dalin E."/>
            <person name="Tice H."/>
            <person name="Pitluck S."/>
            <person name="Chertkov O."/>
            <person name="Brettin T."/>
            <person name="Bruce D."/>
            <person name="Han C."/>
            <person name="Detter J.C."/>
            <person name="Schmutz J."/>
            <person name="Larimer F."/>
            <person name="Land M."/>
            <person name="Hauser L."/>
            <person name="Kyrpides N."/>
            <person name="Mikhailova N."/>
            <person name="Sieprawska-Lupa M."/>
            <person name="Whitman W.B."/>
            <person name="Richardson P."/>
        </authorList>
    </citation>
    <scope>NUCLEOTIDE SEQUENCE [LARGE SCALE GENOMIC DNA]</scope>
    <source>
        <strain>C5 / ATCC BAA-1333</strain>
    </source>
</reference>